<name>TGT_PROM2</name>
<reference key="1">
    <citation type="journal article" date="2007" name="PLoS Genet.">
        <title>Patterns and implications of gene gain and loss in the evolution of Prochlorococcus.</title>
        <authorList>
            <person name="Kettler G.C."/>
            <person name="Martiny A.C."/>
            <person name="Huang K."/>
            <person name="Zucker J."/>
            <person name="Coleman M.L."/>
            <person name="Rodrigue S."/>
            <person name="Chen F."/>
            <person name="Lapidus A."/>
            <person name="Ferriera S."/>
            <person name="Johnson J."/>
            <person name="Steglich C."/>
            <person name="Church G.M."/>
            <person name="Richardson P."/>
            <person name="Chisholm S.W."/>
        </authorList>
    </citation>
    <scope>NUCLEOTIDE SEQUENCE [LARGE SCALE GENOMIC DNA]</scope>
    <source>
        <strain>MIT 9215</strain>
    </source>
</reference>
<gene>
    <name evidence="1" type="primary">tgt</name>
    <name type="ordered locus">P9215_02951</name>
</gene>
<proteinExistence type="inferred from homology"/>
<organism>
    <name type="scientific">Prochlorococcus marinus (strain MIT 9215)</name>
    <dbReference type="NCBI Taxonomy" id="93060"/>
    <lineage>
        <taxon>Bacteria</taxon>
        <taxon>Bacillati</taxon>
        <taxon>Cyanobacteriota</taxon>
        <taxon>Cyanophyceae</taxon>
        <taxon>Synechococcales</taxon>
        <taxon>Prochlorococcaceae</taxon>
        <taxon>Prochlorococcus</taxon>
    </lineage>
</organism>
<protein>
    <recommendedName>
        <fullName evidence="1">Queuine tRNA-ribosyltransferase</fullName>
        <ecNumber evidence="1">2.4.2.29</ecNumber>
    </recommendedName>
    <alternativeName>
        <fullName evidence="1">Guanine insertion enzyme</fullName>
    </alternativeName>
    <alternativeName>
        <fullName evidence="1">tRNA-guanine transglycosylase</fullName>
    </alternativeName>
</protein>
<sequence length="372" mass="41500">MFEFEITSNCSNTKARTGIFHTPNGKVNTPKFMPVGTMATVKGISSKQLTSTGSEMILSNTFHLHLQPGEKLVKESGGIHNFMNWSKPILTDSGGYQVFSLAKLNNISDKGVEFKNPRDGSHVFLSPEKVIKIQMDLGSDVAMAFDHCPPHTANENDIEDSLQRTHSWLEKCIETHQKSNQALFGIVQGGKYPRLREYSAKFTSSFDLPGIAVGGVSVGEAVEDIHSVINYVPKFLPINKPRYLMGIGSLREISLAVANGFDIFDCVLPTRLGRHGTAFLNDERLNLRNARFKNDFSPIDKTCKCETCKSYSRAYLHHLIRNDEILGLTLISLHNIAHLLRFTNAISTAIKDNCFTNDFAPWKTSSIAHHTW</sequence>
<feature type="chain" id="PRO_1000058286" description="Queuine tRNA-ribosyltransferase">
    <location>
        <begin position="1"/>
        <end position="372"/>
    </location>
</feature>
<feature type="region of interest" description="RNA binding" evidence="1">
    <location>
        <begin position="246"/>
        <end position="252"/>
    </location>
</feature>
<feature type="region of interest" description="RNA binding; important for wobble base 34 recognition" evidence="1">
    <location>
        <begin position="270"/>
        <end position="274"/>
    </location>
</feature>
<feature type="active site" description="Proton acceptor" evidence="1">
    <location>
        <position position="92"/>
    </location>
</feature>
<feature type="active site" description="Nucleophile" evidence="1">
    <location>
        <position position="265"/>
    </location>
</feature>
<feature type="binding site" evidence="1">
    <location>
        <begin position="92"/>
        <end position="96"/>
    </location>
    <ligand>
        <name>substrate</name>
    </ligand>
</feature>
<feature type="binding site" evidence="1">
    <location>
        <position position="146"/>
    </location>
    <ligand>
        <name>substrate</name>
    </ligand>
</feature>
<feature type="binding site" evidence="1">
    <location>
        <position position="188"/>
    </location>
    <ligand>
        <name>substrate</name>
    </ligand>
</feature>
<feature type="binding site" evidence="1">
    <location>
        <position position="215"/>
    </location>
    <ligand>
        <name>substrate</name>
    </ligand>
</feature>
<feature type="binding site" evidence="1">
    <location>
        <position position="303"/>
    </location>
    <ligand>
        <name>Zn(2+)</name>
        <dbReference type="ChEBI" id="CHEBI:29105"/>
    </ligand>
</feature>
<feature type="binding site" evidence="1">
    <location>
        <position position="305"/>
    </location>
    <ligand>
        <name>Zn(2+)</name>
        <dbReference type="ChEBI" id="CHEBI:29105"/>
    </ligand>
</feature>
<feature type="binding site" evidence="1">
    <location>
        <position position="308"/>
    </location>
    <ligand>
        <name>Zn(2+)</name>
        <dbReference type="ChEBI" id="CHEBI:29105"/>
    </ligand>
</feature>
<feature type="binding site" evidence="1">
    <location>
        <position position="334"/>
    </location>
    <ligand>
        <name>Zn(2+)</name>
        <dbReference type="ChEBI" id="CHEBI:29105"/>
    </ligand>
</feature>
<evidence type="ECO:0000255" key="1">
    <source>
        <dbReference type="HAMAP-Rule" id="MF_00168"/>
    </source>
</evidence>
<keyword id="KW-0328">Glycosyltransferase</keyword>
<keyword id="KW-0479">Metal-binding</keyword>
<keyword id="KW-0671">Queuosine biosynthesis</keyword>
<keyword id="KW-0808">Transferase</keyword>
<keyword id="KW-0819">tRNA processing</keyword>
<keyword id="KW-0862">Zinc</keyword>
<comment type="function">
    <text evidence="1">Catalyzes the base-exchange of a guanine (G) residue with the queuine precursor 7-aminomethyl-7-deazaguanine (PreQ1) at position 34 (anticodon wobble position) in tRNAs with GU(N) anticodons (tRNA-Asp, -Asn, -His and -Tyr). Catalysis occurs through a double-displacement mechanism. The nucleophile active site attacks the C1' of nucleotide 34 to detach the guanine base from the RNA, forming a covalent enzyme-RNA intermediate. The proton acceptor active site deprotonates the incoming PreQ1, allowing a nucleophilic attack on the C1' of the ribose to form the product. After dissociation, two additional enzymatic reactions on the tRNA convert PreQ1 to queuine (Q), resulting in the hypermodified nucleoside queuosine (7-(((4,5-cis-dihydroxy-2-cyclopenten-1-yl)amino)methyl)-7-deazaguanosine).</text>
</comment>
<comment type="catalytic activity">
    <reaction evidence="1">
        <text>7-aminomethyl-7-carbaguanine + guanosine(34) in tRNA = 7-aminomethyl-7-carbaguanosine(34) in tRNA + guanine</text>
        <dbReference type="Rhea" id="RHEA:24104"/>
        <dbReference type="Rhea" id="RHEA-COMP:10341"/>
        <dbReference type="Rhea" id="RHEA-COMP:10342"/>
        <dbReference type="ChEBI" id="CHEBI:16235"/>
        <dbReference type="ChEBI" id="CHEBI:58703"/>
        <dbReference type="ChEBI" id="CHEBI:74269"/>
        <dbReference type="ChEBI" id="CHEBI:82833"/>
        <dbReference type="EC" id="2.4.2.29"/>
    </reaction>
</comment>
<comment type="cofactor">
    <cofactor evidence="1">
        <name>Zn(2+)</name>
        <dbReference type="ChEBI" id="CHEBI:29105"/>
    </cofactor>
    <text evidence="1">Binds 1 zinc ion per subunit.</text>
</comment>
<comment type="pathway">
    <text evidence="1">tRNA modification; tRNA-queuosine biosynthesis.</text>
</comment>
<comment type="subunit">
    <text evidence="1">Homodimer. Within each dimer, one monomer is responsible for RNA recognition and catalysis, while the other monomer binds to the replacement base PreQ1.</text>
</comment>
<comment type="similarity">
    <text evidence="1">Belongs to the queuine tRNA-ribosyltransferase family.</text>
</comment>
<dbReference type="EC" id="2.4.2.29" evidence="1"/>
<dbReference type="EMBL" id="CP000825">
    <property type="protein sequence ID" value="ABV49912.1"/>
    <property type="molecule type" value="Genomic_DNA"/>
</dbReference>
<dbReference type="RefSeq" id="WP_012007070.1">
    <property type="nucleotide sequence ID" value="NC_009840.1"/>
</dbReference>
<dbReference type="SMR" id="A8G2T1"/>
<dbReference type="STRING" id="93060.P9215_02951"/>
<dbReference type="KEGG" id="pmh:P9215_02951"/>
<dbReference type="eggNOG" id="COG0343">
    <property type="taxonomic scope" value="Bacteria"/>
</dbReference>
<dbReference type="HOGENOM" id="CLU_022060_0_1_3"/>
<dbReference type="OrthoDB" id="9805417at2"/>
<dbReference type="UniPathway" id="UPA00392"/>
<dbReference type="Proteomes" id="UP000002014">
    <property type="component" value="Chromosome"/>
</dbReference>
<dbReference type="GO" id="GO:0005829">
    <property type="term" value="C:cytosol"/>
    <property type="evidence" value="ECO:0007669"/>
    <property type="project" value="TreeGrafter"/>
</dbReference>
<dbReference type="GO" id="GO:0046872">
    <property type="term" value="F:metal ion binding"/>
    <property type="evidence" value="ECO:0007669"/>
    <property type="project" value="UniProtKB-KW"/>
</dbReference>
<dbReference type="GO" id="GO:0008479">
    <property type="term" value="F:tRNA-guanosine(34) queuine transglycosylase activity"/>
    <property type="evidence" value="ECO:0007669"/>
    <property type="project" value="UniProtKB-UniRule"/>
</dbReference>
<dbReference type="GO" id="GO:0008616">
    <property type="term" value="P:queuosine biosynthetic process"/>
    <property type="evidence" value="ECO:0007669"/>
    <property type="project" value="UniProtKB-UniRule"/>
</dbReference>
<dbReference type="GO" id="GO:0002099">
    <property type="term" value="P:tRNA wobble guanine modification"/>
    <property type="evidence" value="ECO:0007669"/>
    <property type="project" value="TreeGrafter"/>
</dbReference>
<dbReference type="GO" id="GO:0101030">
    <property type="term" value="P:tRNA-guanine transglycosylation"/>
    <property type="evidence" value="ECO:0007669"/>
    <property type="project" value="InterPro"/>
</dbReference>
<dbReference type="Gene3D" id="3.20.20.105">
    <property type="entry name" value="Queuine tRNA-ribosyltransferase-like"/>
    <property type="match status" value="1"/>
</dbReference>
<dbReference type="HAMAP" id="MF_00168">
    <property type="entry name" value="Q_tRNA_Tgt"/>
    <property type="match status" value="1"/>
</dbReference>
<dbReference type="InterPro" id="IPR050076">
    <property type="entry name" value="ArchSynthase1/Queuine_TRR"/>
</dbReference>
<dbReference type="InterPro" id="IPR004803">
    <property type="entry name" value="TGT"/>
</dbReference>
<dbReference type="InterPro" id="IPR036511">
    <property type="entry name" value="TGT-like_sf"/>
</dbReference>
<dbReference type="InterPro" id="IPR002616">
    <property type="entry name" value="tRNA_ribo_trans-like"/>
</dbReference>
<dbReference type="NCBIfam" id="TIGR00430">
    <property type="entry name" value="Q_tRNA_tgt"/>
    <property type="match status" value="1"/>
</dbReference>
<dbReference type="NCBIfam" id="TIGR00449">
    <property type="entry name" value="tgt_general"/>
    <property type="match status" value="1"/>
</dbReference>
<dbReference type="PANTHER" id="PTHR46499">
    <property type="entry name" value="QUEUINE TRNA-RIBOSYLTRANSFERASE"/>
    <property type="match status" value="1"/>
</dbReference>
<dbReference type="PANTHER" id="PTHR46499:SF1">
    <property type="entry name" value="QUEUINE TRNA-RIBOSYLTRANSFERASE"/>
    <property type="match status" value="1"/>
</dbReference>
<dbReference type="Pfam" id="PF01702">
    <property type="entry name" value="TGT"/>
    <property type="match status" value="1"/>
</dbReference>
<dbReference type="SUPFAM" id="SSF51713">
    <property type="entry name" value="tRNA-guanine transglycosylase"/>
    <property type="match status" value="1"/>
</dbReference>
<accession>A8G2T1</accession>